<comment type="function">
    <text evidence="5">Secreted manganese dependent endoglucanase that acts by cleaving the beta-1,4-glucose linkage (PubMed:26173955). Exhibits high activity toward carboxymethyl-cellulose (CMC), barley glucan, and glucomannan (PubMed:26173955). Displays low activity on larminarin and xyloglucan but does not hydrolyze hemicellulose substrates such as birchwood xylan, arabinoxylan, and arabinan (PubMed:26173955).</text>
</comment>
<comment type="catalytic activity">
    <reaction evidence="5">
        <text>Endohydrolysis of (1-&gt;4)-beta-D-glucosidic linkages in cellulose, lichenin and cereal beta-D-glucans.</text>
        <dbReference type="EC" id="3.2.1.4"/>
    </reaction>
</comment>
<comment type="cofactor">
    <cofactor evidence="5">
        <name>Mn(2+)</name>
        <dbReference type="ChEBI" id="CHEBI:29035"/>
    </cofactor>
</comment>
<comment type="biophysicochemical properties">
    <kinetics>
        <KM evidence="5">3.7 uM for carboxymethyl-cellulose (CMC)</KM>
        <Vmax evidence="5">208.0 umol/min/mg enzyme toward carboxymethyl-cellulose (CMC)</Vmax>
    </kinetics>
    <phDependence>
        <text evidence="5">Optimum pH is 4.5-6.0.</text>
    </phDependence>
    <temperatureDependence>
        <text evidence="5">Optimum temperature is 50-60 degrees Celsius.</text>
    </temperatureDependence>
</comment>
<comment type="subcellular location">
    <subcellularLocation>
        <location evidence="4">Secreted</location>
    </subcellularLocation>
</comment>
<comment type="biotechnology">
    <text evidence="5">Displays a synergistic action with cellobiase resulting in an increase of the saccharification of NaOH-pretreated barley straw, promising a further use of this enzyme in biomass saccharification purpose (PubMed:26173955).</text>
</comment>
<comment type="similarity">
    <text evidence="8">Belongs to the glycosyl hydrolase 5 (cellulase A) family.</text>
</comment>
<evidence type="ECO:0000255" key="1"/>
<evidence type="ECO:0000255" key="2">
    <source>
        <dbReference type="PROSITE-ProRule" id="PRU00498"/>
    </source>
</evidence>
<evidence type="ECO:0000255" key="3">
    <source>
        <dbReference type="PROSITE-ProRule" id="PRU00597"/>
    </source>
</evidence>
<evidence type="ECO:0000269" key="4">
    <source>
    </source>
</evidence>
<evidence type="ECO:0000269" key="5">
    <source>
    </source>
</evidence>
<evidence type="ECO:0000303" key="6">
    <source>
    </source>
</evidence>
<evidence type="ECO:0000303" key="7">
    <source>
    </source>
</evidence>
<evidence type="ECO:0000305" key="8"/>
<evidence type="ECO:0000305" key="9">
    <source>
    </source>
</evidence>
<evidence type="ECO:0000305" key="10">
    <source>
    </source>
</evidence>
<sequence length="386" mass="40412">MLKYASIALALATLGVAQQQQWGQCGGIGWTGATTCVAGSVCSVLNPYYSQCIPGAATVTSSSAPSTPTPPAGALPRLGGVNTAGYDFSVATDGSFTGTGVSPPVSQFSHFSSQGANLYRIPFAWQLMTPTLGGTISQSFLSRYDQTVQAALNSGPNVFVIIDLHNYARWNGGIIAQGGPTDAQFQSIWTQLAQKYGSNQRVIFGIMNEPHDIPSISTWVNSVQGAVNAIRAAGATNYLLLPGSSWSSAQAFPTEAGPLLVKVTDPLGGTSKLIFDVHKYLDSDNSGTHPDCTTDNVQVLQTLVQFLQANGNRQAILSETGGGNTSSCESLLANELAYVKSAYPTLAGFSVWAAGAFDTTYVLTVTPNADGSDQPLWVDAVKPNLP</sequence>
<proteinExistence type="evidence at protein level"/>
<feature type="signal peptide" evidence="1">
    <location>
        <begin position="1"/>
        <end position="17"/>
    </location>
</feature>
<feature type="chain" id="PRO_5004269074" description="Manganese dependent endoglucanase Eg5A">
    <location>
        <begin position="18"/>
        <end position="386"/>
    </location>
</feature>
<feature type="domain" description="CBM1" evidence="3">
    <location>
        <begin position="18"/>
        <end position="53"/>
    </location>
</feature>
<feature type="active site" description="Proton donor" evidence="10">
    <location>
        <position position="209"/>
    </location>
</feature>
<feature type="active site" description="Nucleophile" evidence="10">
    <location>
        <position position="319"/>
    </location>
</feature>
<feature type="glycosylation site" description="N-linked (GlcNAc...) asparagine" evidence="2">
    <location>
        <position position="324"/>
    </location>
</feature>
<reference key="1">
    <citation type="journal article" date="2005" name="J. Biotechnol.">
        <title>The Phanerochaete chrysosporium secretome: database predictions and initial mass spectrometry peptide identifications in cellulose-grown medium.</title>
        <authorList>
            <person name="Wymelenberg A.V."/>
            <person name="Sabat G."/>
            <person name="Martinez D."/>
            <person name="Rajangam A.S."/>
            <person name="Teeri T.T."/>
            <person name="Gaskell J."/>
            <person name="Kersten P.J."/>
            <person name="Cullen D."/>
        </authorList>
    </citation>
    <scope>NUCLEOTIDE SEQUENCE [MRNA]</scope>
    <scope>IDENTIFICATION BY MASS SPECTROMETRY</scope>
    <scope>SUBCELLULAR LOCATION</scope>
</reference>
<reference key="2">
    <citation type="journal article" date="2016" name="J. Biosci. Bioeng.">
        <title>Characterization of a novel manganese dependent endoglucanase belongs in GH family 5 from Phanerochaete chrysosporium.</title>
        <authorList>
            <person name="Huy N.D."/>
            <person name="Nguyen C.L."/>
            <person name="Park H.S."/>
            <person name="Loc N.H."/>
            <person name="Choi M.S."/>
            <person name="Kim D.H."/>
            <person name="Seo J.W."/>
            <person name="Park S.M."/>
        </authorList>
    </citation>
    <scope>FUNCTION</scope>
    <scope>CATALYTIC ACTIVITY</scope>
    <scope>BIOPHYSICOCHEMICAL PROPERTIES</scope>
    <scope>COFACTOR</scope>
    <scope>BIOTECHNOLOGY</scope>
</reference>
<name>EG5A_PHACH</name>
<gene>
    <name evidence="7" type="primary">Eg5A</name>
    <name evidence="6" type="synonym">cel5A</name>
</gene>
<accession>Q66NB7</accession>
<dbReference type="EC" id="3.2.1.4" evidence="5"/>
<dbReference type="EMBL" id="AY682743">
    <property type="protein sequence ID" value="AAU12275.2"/>
    <property type="molecule type" value="mRNA"/>
</dbReference>
<dbReference type="SMR" id="Q66NB7"/>
<dbReference type="CAZy" id="CBM1">
    <property type="family name" value="Carbohydrate-Binding Module Family 1"/>
</dbReference>
<dbReference type="CAZy" id="GH5">
    <property type="family name" value="Glycoside Hydrolase Family 5"/>
</dbReference>
<dbReference type="GlyCosmos" id="Q66NB7">
    <property type="glycosylation" value="1 site, No reported glycans"/>
</dbReference>
<dbReference type="EnsemblFungi" id="AGR57_10566T0">
    <property type="protein sequence ID" value="AGR57_10566T0-p1"/>
    <property type="gene ID" value="AGR57_10566"/>
</dbReference>
<dbReference type="VEuPathDB" id="FungiDB:AGR57_10566"/>
<dbReference type="BRENDA" id="3.2.1.4">
    <property type="organism ID" value="1380"/>
</dbReference>
<dbReference type="GO" id="GO:0005576">
    <property type="term" value="C:extracellular region"/>
    <property type="evidence" value="ECO:0007669"/>
    <property type="project" value="UniProtKB-SubCell"/>
</dbReference>
<dbReference type="GO" id="GO:0008810">
    <property type="term" value="F:cellulase activity"/>
    <property type="evidence" value="ECO:0007669"/>
    <property type="project" value="UniProtKB-EC"/>
</dbReference>
<dbReference type="GO" id="GO:0030248">
    <property type="term" value="F:cellulose binding"/>
    <property type="evidence" value="ECO:0007669"/>
    <property type="project" value="InterPro"/>
</dbReference>
<dbReference type="GO" id="GO:0030245">
    <property type="term" value="P:cellulose catabolic process"/>
    <property type="evidence" value="ECO:0007669"/>
    <property type="project" value="UniProtKB-KW"/>
</dbReference>
<dbReference type="FunFam" id="3.20.20.80:FF:000124">
    <property type="entry name" value="Exported cellulase"/>
    <property type="match status" value="1"/>
</dbReference>
<dbReference type="Gene3D" id="3.20.20.80">
    <property type="entry name" value="Glycosidases"/>
    <property type="match status" value="1"/>
</dbReference>
<dbReference type="InterPro" id="IPR035971">
    <property type="entry name" value="CBD_sf"/>
</dbReference>
<dbReference type="InterPro" id="IPR000254">
    <property type="entry name" value="Cellulose-bd_dom_fun"/>
</dbReference>
<dbReference type="InterPro" id="IPR001547">
    <property type="entry name" value="Glyco_hydro_5"/>
</dbReference>
<dbReference type="InterPro" id="IPR018087">
    <property type="entry name" value="Glyco_hydro_5_CS"/>
</dbReference>
<dbReference type="InterPro" id="IPR017853">
    <property type="entry name" value="Glycoside_hydrolase_SF"/>
</dbReference>
<dbReference type="PANTHER" id="PTHR34142:SF5">
    <property type="entry name" value="CBM1 DOMAIN-CONTAINING PROTEIN"/>
    <property type="match status" value="1"/>
</dbReference>
<dbReference type="PANTHER" id="PTHR34142">
    <property type="entry name" value="ENDO-BETA-1,4-GLUCANASE A"/>
    <property type="match status" value="1"/>
</dbReference>
<dbReference type="Pfam" id="PF00734">
    <property type="entry name" value="CBM_1"/>
    <property type="match status" value="1"/>
</dbReference>
<dbReference type="Pfam" id="PF00150">
    <property type="entry name" value="Cellulase"/>
    <property type="match status" value="1"/>
</dbReference>
<dbReference type="SMART" id="SM00236">
    <property type="entry name" value="fCBD"/>
    <property type="match status" value="1"/>
</dbReference>
<dbReference type="SUPFAM" id="SSF51445">
    <property type="entry name" value="(Trans)glycosidases"/>
    <property type="match status" value="1"/>
</dbReference>
<dbReference type="SUPFAM" id="SSF57180">
    <property type="entry name" value="Cellulose-binding domain"/>
    <property type="match status" value="1"/>
</dbReference>
<dbReference type="PROSITE" id="PS00562">
    <property type="entry name" value="CBM1_1"/>
    <property type="match status" value="1"/>
</dbReference>
<dbReference type="PROSITE" id="PS51164">
    <property type="entry name" value="CBM1_2"/>
    <property type="match status" value="1"/>
</dbReference>
<dbReference type="PROSITE" id="PS00659">
    <property type="entry name" value="GLYCOSYL_HYDROL_F5"/>
    <property type="match status" value="1"/>
</dbReference>
<organism>
    <name type="scientific">Phanerodontia chrysosporium</name>
    <name type="common">White-rot fungus</name>
    <name type="synonym">Sporotrichum pruinosum</name>
    <dbReference type="NCBI Taxonomy" id="2822231"/>
    <lineage>
        <taxon>Eukaryota</taxon>
        <taxon>Fungi</taxon>
        <taxon>Dikarya</taxon>
        <taxon>Basidiomycota</taxon>
        <taxon>Agaricomycotina</taxon>
        <taxon>Agaricomycetes</taxon>
        <taxon>Polyporales</taxon>
        <taxon>Phanerochaetaceae</taxon>
        <taxon>Phanerodontia</taxon>
    </lineage>
</organism>
<keyword id="KW-0119">Carbohydrate metabolism</keyword>
<keyword id="KW-0136">Cellulose degradation</keyword>
<keyword id="KW-0325">Glycoprotein</keyword>
<keyword id="KW-0326">Glycosidase</keyword>
<keyword id="KW-0378">Hydrolase</keyword>
<keyword id="KW-0624">Polysaccharide degradation</keyword>
<keyword id="KW-0964">Secreted</keyword>
<keyword id="KW-0732">Signal</keyword>
<protein>
    <recommendedName>
        <fullName evidence="7">Manganese dependent endoglucanase Eg5A</fullName>
        <ecNumber evidence="5">3.2.1.4</ecNumber>
    </recommendedName>
    <alternativeName>
        <fullName evidence="10">Carboxymethyl-cellulase 5A</fullName>
        <shortName evidence="10">CMCase 5A</shortName>
        <shortName evidence="9">Cellulase 5A</shortName>
    </alternativeName>
    <alternativeName>
        <fullName evidence="10">Endo-1,4-beta-glucanase Eg5A</fullName>
    </alternativeName>
</protein>